<gene>
    <name evidence="1" type="primary">sat</name>
    <name type="ordered locus">Deide_13930</name>
</gene>
<reference key="1">
    <citation type="journal article" date="2009" name="PLoS Genet.">
        <title>Alliance of proteomics and genomics to unravel the specificities of Sahara bacterium Deinococcus deserti.</title>
        <authorList>
            <person name="de Groot A."/>
            <person name="Dulermo R."/>
            <person name="Ortet P."/>
            <person name="Blanchard L."/>
            <person name="Guerin P."/>
            <person name="Fernandez B."/>
            <person name="Vacherie B."/>
            <person name="Dossat C."/>
            <person name="Jolivet E."/>
            <person name="Siguier P."/>
            <person name="Chandler M."/>
            <person name="Barakat M."/>
            <person name="Dedieu A."/>
            <person name="Barbe V."/>
            <person name="Heulin T."/>
            <person name="Sommer S."/>
            <person name="Achouak W."/>
            <person name="Armengaud J."/>
        </authorList>
    </citation>
    <scope>NUCLEOTIDE SEQUENCE [LARGE SCALE GENOMIC DNA]</scope>
    <source>
        <strain>DSM 17065 / CIP 109153 / LMG 22923 / VCD115</strain>
    </source>
</reference>
<proteinExistence type="inferred from homology"/>
<comment type="catalytic activity">
    <reaction evidence="1">
        <text>sulfate + ATP + H(+) = adenosine 5'-phosphosulfate + diphosphate</text>
        <dbReference type="Rhea" id="RHEA:18133"/>
        <dbReference type="ChEBI" id="CHEBI:15378"/>
        <dbReference type="ChEBI" id="CHEBI:16189"/>
        <dbReference type="ChEBI" id="CHEBI:30616"/>
        <dbReference type="ChEBI" id="CHEBI:33019"/>
        <dbReference type="ChEBI" id="CHEBI:58243"/>
        <dbReference type="EC" id="2.7.7.4"/>
    </reaction>
</comment>
<comment type="pathway">
    <text evidence="1">Sulfur metabolism; hydrogen sulfide biosynthesis; sulfite from sulfate: step 1/3.</text>
</comment>
<comment type="similarity">
    <text evidence="1">Belongs to the sulfate adenylyltransferase family.</text>
</comment>
<evidence type="ECO:0000255" key="1">
    <source>
        <dbReference type="HAMAP-Rule" id="MF_00066"/>
    </source>
</evidence>
<protein>
    <recommendedName>
        <fullName evidence="1">Sulfate adenylyltransferase</fullName>
        <ecNumber evidence="1">2.7.7.4</ecNumber>
    </recommendedName>
    <alternativeName>
        <fullName evidence="1">ATP-sulfurylase</fullName>
    </alternativeName>
    <alternativeName>
        <fullName evidence="1">Sulfate adenylate transferase</fullName>
        <shortName evidence="1">SAT</shortName>
    </alternativeName>
</protein>
<dbReference type="EC" id="2.7.7.4" evidence="1"/>
<dbReference type="EMBL" id="CP001114">
    <property type="protein sequence ID" value="ACO46336.1"/>
    <property type="molecule type" value="Genomic_DNA"/>
</dbReference>
<dbReference type="RefSeq" id="WP_012693459.1">
    <property type="nucleotide sequence ID" value="NC_012526.1"/>
</dbReference>
<dbReference type="SMR" id="C1CVW9"/>
<dbReference type="STRING" id="546414.Deide_13930"/>
<dbReference type="PaxDb" id="546414-Deide_13930"/>
<dbReference type="KEGG" id="ddr:Deide_13930"/>
<dbReference type="eggNOG" id="COG2046">
    <property type="taxonomic scope" value="Bacteria"/>
</dbReference>
<dbReference type="HOGENOM" id="CLU_022950_1_1_0"/>
<dbReference type="OrthoDB" id="9804504at2"/>
<dbReference type="UniPathway" id="UPA00140">
    <property type="reaction ID" value="UER00204"/>
</dbReference>
<dbReference type="Proteomes" id="UP000002208">
    <property type="component" value="Chromosome"/>
</dbReference>
<dbReference type="GO" id="GO:0005524">
    <property type="term" value="F:ATP binding"/>
    <property type="evidence" value="ECO:0007669"/>
    <property type="project" value="UniProtKB-KW"/>
</dbReference>
<dbReference type="GO" id="GO:0004781">
    <property type="term" value="F:sulfate adenylyltransferase (ATP) activity"/>
    <property type="evidence" value="ECO:0007669"/>
    <property type="project" value="UniProtKB-UniRule"/>
</dbReference>
<dbReference type="GO" id="GO:0070814">
    <property type="term" value="P:hydrogen sulfide biosynthetic process"/>
    <property type="evidence" value="ECO:0007669"/>
    <property type="project" value="UniProtKB-UniRule"/>
</dbReference>
<dbReference type="GO" id="GO:0000103">
    <property type="term" value="P:sulfate assimilation"/>
    <property type="evidence" value="ECO:0007669"/>
    <property type="project" value="UniProtKB-UniRule"/>
</dbReference>
<dbReference type="CDD" id="cd00517">
    <property type="entry name" value="ATPS"/>
    <property type="match status" value="1"/>
</dbReference>
<dbReference type="Gene3D" id="3.40.50.620">
    <property type="entry name" value="HUPs"/>
    <property type="match status" value="1"/>
</dbReference>
<dbReference type="Gene3D" id="3.10.400.10">
    <property type="entry name" value="Sulfate adenylyltransferase"/>
    <property type="match status" value="1"/>
</dbReference>
<dbReference type="HAMAP" id="MF_00066">
    <property type="entry name" value="Sulf_adenylyltr"/>
    <property type="match status" value="1"/>
</dbReference>
<dbReference type="InterPro" id="IPR025980">
    <property type="entry name" value="ATP-Sase_PUA-like_dom"/>
</dbReference>
<dbReference type="InterPro" id="IPR015947">
    <property type="entry name" value="PUA-like_sf"/>
</dbReference>
<dbReference type="InterPro" id="IPR014729">
    <property type="entry name" value="Rossmann-like_a/b/a_fold"/>
</dbReference>
<dbReference type="InterPro" id="IPR020792">
    <property type="entry name" value="SO4_adenylyltransferase_pro"/>
</dbReference>
<dbReference type="InterPro" id="IPR024951">
    <property type="entry name" value="Sulfurylase_cat_dom"/>
</dbReference>
<dbReference type="InterPro" id="IPR002650">
    <property type="entry name" value="Sulphate_adenylyltransferase"/>
</dbReference>
<dbReference type="NCBIfam" id="NF003166">
    <property type="entry name" value="PRK04149.1"/>
    <property type="match status" value="1"/>
</dbReference>
<dbReference type="NCBIfam" id="TIGR00339">
    <property type="entry name" value="sopT"/>
    <property type="match status" value="1"/>
</dbReference>
<dbReference type="PANTHER" id="PTHR43509">
    <property type="match status" value="1"/>
</dbReference>
<dbReference type="PANTHER" id="PTHR43509:SF1">
    <property type="entry name" value="SULFATE ADENYLYLTRANSFERASE"/>
    <property type="match status" value="1"/>
</dbReference>
<dbReference type="Pfam" id="PF01747">
    <property type="entry name" value="ATP-sulfurylase"/>
    <property type="match status" value="1"/>
</dbReference>
<dbReference type="Pfam" id="PF14306">
    <property type="entry name" value="PUA_2"/>
    <property type="match status" value="1"/>
</dbReference>
<dbReference type="SUPFAM" id="SSF52374">
    <property type="entry name" value="Nucleotidylyl transferase"/>
    <property type="match status" value="1"/>
</dbReference>
<dbReference type="SUPFAM" id="SSF88697">
    <property type="entry name" value="PUA domain-like"/>
    <property type="match status" value="1"/>
</dbReference>
<sequence>MTILLSETAILPTPLGGTLVNALHRPGHDFDPAELRDLPRLALSERSAADLEMLGTGAYSPLRGFVGEADYLSIIERMRLADGTPWSIPITLPVTREQASELSGRVVLTHGGQDVGWIDVQEKFEARKSFEAREVYRTEDPAHPGVAALLAQGDVNLSGPVALFDVPRGAFPRHHRTPAEVRAVIEARGWRSTVAFQTRNPIHRAHEYLQKVALELVDGLLLHPLVGATKGDDVPADTRVKAYEVLLDNYYPQERTLLSVYPAAMRYAGPREAILHALSRRNYGVTHFIVGRDHAGVGSYYGTYDAQEIFSAYAPQELGIQILKFEHTFYCQSCGQLVSPRTCPHDSSHHLVLSGTKVREKLRAGETLPAEFTRPEVAEVLREAYAAQG</sequence>
<name>SAT_DEIDV</name>
<organism>
    <name type="scientific">Deinococcus deserti (strain DSM 17065 / CIP 109153 / LMG 22923 / VCD115)</name>
    <dbReference type="NCBI Taxonomy" id="546414"/>
    <lineage>
        <taxon>Bacteria</taxon>
        <taxon>Thermotogati</taxon>
        <taxon>Deinococcota</taxon>
        <taxon>Deinococci</taxon>
        <taxon>Deinococcales</taxon>
        <taxon>Deinococcaceae</taxon>
        <taxon>Deinococcus</taxon>
    </lineage>
</organism>
<feature type="chain" id="PRO_1000202413" description="Sulfate adenylyltransferase">
    <location>
        <begin position="1"/>
        <end position="389"/>
    </location>
</feature>
<accession>C1CVW9</accession>
<keyword id="KW-0067">ATP-binding</keyword>
<keyword id="KW-0547">Nucleotide-binding</keyword>
<keyword id="KW-0548">Nucleotidyltransferase</keyword>
<keyword id="KW-1185">Reference proteome</keyword>
<keyword id="KW-0808">Transferase</keyword>